<name>YAO7_SCHPO</name>
<feature type="chain" id="PRO_0000115008" description="Uncharacterized transcriptional regulatory protein C11D3.07c">
    <location>
        <begin position="1"/>
        <end position="637"/>
    </location>
</feature>
<feature type="DNA-binding region" description="Zn(2)-C6 fungal-type" evidence="1">
    <location>
        <begin position="7"/>
        <end position="34"/>
    </location>
</feature>
<feature type="zinc finger region" description="C2H2-type; degenerate">
    <location>
        <begin position="304"/>
        <end position="327"/>
    </location>
</feature>
<organism>
    <name type="scientific">Schizosaccharomyces pombe (strain 972 / ATCC 24843)</name>
    <name type="common">Fission yeast</name>
    <dbReference type="NCBI Taxonomy" id="284812"/>
    <lineage>
        <taxon>Eukaryota</taxon>
        <taxon>Fungi</taxon>
        <taxon>Dikarya</taxon>
        <taxon>Ascomycota</taxon>
        <taxon>Taphrinomycotina</taxon>
        <taxon>Schizosaccharomycetes</taxon>
        <taxon>Schizosaccharomycetales</taxon>
        <taxon>Schizosaccharomycetaceae</taxon>
        <taxon>Schizosaccharomyces</taxon>
    </lineage>
</organism>
<comment type="subcellular location">
    <subcellularLocation>
        <location evidence="2">Nucleus</location>
    </subcellularLocation>
</comment>
<reference key="1">
    <citation type="journal article" date="2002" name="Nature">
        <title>The genome sequence of Schizosaccharomyces pombe.</title>
        <authorList>
            <person name="Wood V."/>
            <person name="Gwilliam R."/>
            <person name="Rajandream M.A."/>
            <person name="Lyne M.H."/>
            <person name="Lyne R."/>
            <person name="Stewart A."/>
            <person name="Sgouros J.G."/>
            <person name="Peat N."/>
            <person name="Hayles J."/>
            <person name="Baker S.G."/>
            <person name="Basham D."/>
            <person name="Bowman S."/>
            <person name="Brooks K."/>
            <person name="Brown D."/>
            <person name="Brown S."/>
            <person name="Chillingworth T."/>
            <person name="Churcher C.M."/>
            <person name="Collins M."/>
            <person name="Connor R."/>
            <person name="Cronin A."/>
            <person name="Davis P."/>
            <person name="Feltwell T."/>
            <person name="Fraser A."/>
            <person name="Gentles S."/>
            <person name="Goble A."/>
            <person name="Hamlin N."/>
            <person name="Harris D.E."/>
            <person name="Hidalgo J."/>
            <person name="Hodgson G."/>
            <person name="Holroyd S."/>
            <person name="Hornsby T."/>
            <person name="Howarth S."/>
            <person name="Huckle E.J."/>
            <person name="Hunt S."/>
            <person name="Jagels K."/>
            <person name="James K.D."/>
            <person name="Jones L."/>
            <person name="Jones M."/>
            <person name="Leather S."/>
            <person name="McDonald S."/>
            <person name="McLean J."/>
            <person name="Mooney P."/>
            <person name="Moule S."/>
            <person name="Mungall K.L."/>
            <person name="Murphy L.D."/>
            <person name="Niblett D."/>
            <person name="Odell C."/>
            <person name="Oliver K."/>
            <person name="O'Neil S."/>
            <person name="Pearson D."/>
            <person name="Quail M.A."/>
            <person name="Rabbinowitsch E."/>
            <person name="Rutherford K.M."/>
            <person name="Rutter S."/>
            <person name="Saunders D."/>
            <person name="Seeger K."/>
            <person name="Sharp S."/>
            <person name="Skelton J."/>
            <person name="Simmonds M.N."/>
            <person name="Squares R."/>
            <person name="Squares S."/>
            <person name="Stevens K."/>
            <person name="Taylor K."/>
            <person name="Taylor R.G."/>
            <person name="Tivey A."/>
            <person name="Walsh S.V."/>
            <person name="Warren T."/>
            <person name="Whitehead S."/>
            <person name="Woodward J.R."/>
            <person name="Volckaert G."/>
            <person name="Aert R."/>
            <person name="Robben J."/>
            <person name="Grymonprez B."/>
            <person name="Weltjens I."/>
            <person name="Vanstreels E."/>
            <person name="Rieger M."/>
            <person name="Schaefer M."/>
            <person name="Mueller-Auer S."/>
            <person name="Gabel C."/>
            <person name="Fuchs M."/>
            <person name="Duesterhoeft A."/>
            <person name="Fritzc C."/>
            <person name="Holzer E."/>
            <person name="Moestl D."/>
            <person name="Hilbert H."/>
            <person name="Borzym K."/>
            <person name="Langer I."/>
            <person name="Beck A."/>
            <person name="Lehrach H."/>
            <person name="Reinhardt R."/>
            <person name="Pohl T.M."/>
            <person name="Eger P."/>
            <person name="Zimmermann W."/>
            <person name="Wedler H."/>
            <person name="Wambutt R."/>
            <person name="Purnelle B."/>
            <person name="Goffeau A."/>
            <person name="Cadieu E."/>
            <person name="Dreano S."/>
            <person name="Gloux S."/>
            <person name="Lelaure V."/>
            <person name="Mottier S."/>
            <person name="Galibert F."/>
            <person name="Aves S.J."/>
            <person name="Xiang Z."/>
            <person name="Hunt C."/>
            <person name="Moore K."/>
            <person name="Hurst S.M."/>
            <person name="Lucas M."/>
            <person name="Rochet M."/>
            <person name="Gaillardin C."/>
            <person name="Tallada V.A."/>
            <person name="Garzon A."/>
            <person name="Thode G."/>
            <person name="Daga R.R."/>
            <person name="Cruzado L."/>
            <person name="Jimenez J."/>
            <person name="Sanchez M."/>
            <person name="del Rey F."/>
            <person name="Benito J."/>
            <person name="Dominguez A."/>
            <person name="Revuelta J.L."/>
            <person name="Moreno S."/>
            <person name="Armstrong J."/>
            <person name="Forsburg S.L."/>
            <person name="Cerutti L."/>
            <person name="Lowe T."/>
            <person name="McCombie W.R."/>
            <person name="Paulsen I."/>
            <person name="Potashkin J."/>
            <person name="Shpakovski G.V."/>
            <person name="Ussery D."/>
            <person name="Barrell B.G."/>
            <person name="Nurse P."/>
        </authorList>
    </citation>
    <scope>NUCLEOTIDE SEQUENCE [LARGE SCALE GENOMIC DNA]</scope>
    <source>
        <strain>972 / ATCC 24843</strain>
    </source>
</reference>
<protein>
    <recommendedName>
        <fullName>Uncharacterized transcriptional regulatory protein C11D3.07c</fullName>
    </recommendedName>
</protein>
<proteinExistence type="predicted"/>
<sequence>MSQNKACDLCRLKKIKCSRGQPRCQTCTLFQADCHYSNRARRKRLVQRSKETFGGITLPVFDYAAGINGNEPEPSDHSIPNQENFALTTNGTISKNIEKPEDGEESVQRRLKLLEEKIDLLLDIATETSEFKRENKAIELPSLVTQIKDAESIVIKHRQGSPVDNTPTRILNVESLFPPQLPDWEKAFHDIPKKEVAHELVTSYFQHVNWWWPTFVYNDFMYEFERLYAFGFHSNNAWLISFYSILALSSIRKRLGNSKTLAESLFSTAWVFVQKSDFFLTPSIDKVQALIVMTQYAAYLSSSSLCRTLCGQACLMAQQLNLHRKQSTDVEPEKAESWKRIFWMCYILDKNISLIFGTPSVFNDKDIDCNLPDSKYELLFGVQSGGDLIFVPTVSLTIIQSEIRNRLYSVKSPTQMAAREKIIIPIHQKLKAWEENLPSEIKMYHEMLLNNTFSPTISLSDRFEFLTFAGMEVYFSYLNTLIILHRPSSSTENRRICINAAREAVQLLKNRLNIDLRVNVKADPLWIFLYCPFTPFLIIFNNLVHETDTETDSETLLNDLDLLHVIYDFFMEMEPVSDVALELVKIADKLLRVAKEVCSAKNNDVTDSTFKDIVEGFELNDLNSWDFDRVTNVMRNL</sequence>
<gene>
    <name type="ORF">SPAC11D3.07c</name>
</gene>
<accession>Q10086</accession>
<dbReference type="EMBL" id="CU329670">
    <property type="protein sequence ID" value="CAA92308.3"/>
    <property type="molecule type" value="Genomic_DNA"/>
</dbReference>
<dbReference type="PIR" id="T37518">
    <property type="entry name" value="T37518"/>
</dbReference>
<dbReference type="SMR" id="Q10086"/>
<dbReference type="BioGRID" id="278149">
    <property type="interactions" value="29"/>
</dbReference>
<dbReference type="iPTMnet" id="Q10086"/>
<dbReference type="PaxDb" id="4896-SPAC11D3.07c.1"/>
<dbReference type="EnsemblFungi" id="SPAC11D3.07c.1">
    <property type="protein sequence ID" value="SPAC11D3.07c.1:pep"/>
    <property type="gene ID" value="SPAC11D3.07c"/>
</dbReference>
<dbReference type="KEGG" id="spo:2541653"/>
<dbReference type="PomBase" id="SPAC11D3.07c"/>
<dbReference type="VEuPathDB" id="FungiDB:SPAC11D3.07c"/>
<dbReference type="eggNOG" id="ENOG502S2DS">
    <property type="taxonomic scope" value="Eukaryota"/>
</dbReference>
<dbReference type="HOGENOM" id="CLU_458675_0_0_1"/>
<dbReference type="InParanoid" id="Q10086"/>
<dbReference type="OMA" id="ETYIAIM"/>
<dbReference type="PhylomeDB" id="Q10086"/>
<dbReference type="PRO" id="PR:Q10086"/>
<dbReference type="Proteomes" id="UP000002485">
    <property type="component" value="Chromosome I"/>
</dbReference>
<dbReference type="GO" id="GO:0005634">
    <property type="term" value="C:nucleus"/>
    <property type="evidence" value="ECO:0007005"/>
    <property type="project" value="PomBase"/>
</dbReference>
<dbReference type="GO" id="GO:0000981">
    <property type="term" value="F:DNA-binding transcription factor activity, RNA polymerase II-specific"/>
    <property type="evidence" value="ECO:0000318"/>
    <property type="project" value="GO_Central"/>
</dbReference>
<dbReference type="GO" id="GO:0000978">
    <property type="term" value="F:RNA polymerase II cis-regulatory region sequence-specific DNA binding"/>
    <property type="evidence" value="ECO:0000255"/>
    <property type="project" value="PomBase"/>
</dbReference>
<dbReference type="GO" id="GO:0043565">
    <property type="term" value="F:sequence-specific DNA binding"/>
    <property type="evidence" value="ECO:0000318"/>
    <property type="project" value="GO_Central"/>
</dbReference>
<dbReference type="GO" id="GO:0008270">
    <property type="term" value="F:zinc ion binding"/>
    <property type="evidence" value="ECO:0000255"/>
    <property type="project" value="PomBase"/>
</dbReference>
<dbReference type="GO" id="GO:0006351">
    <property type="term" value="P:DNA-templated transcription"/>
    <property type="evidence" value="ECO:0007669"/>
    <property type="project" value="InterPro"/>
</dbReference>
<dbReference type="GO" id="GO:0045944">
    <property type="term" value="P:positive regulation of transcription by RNA polymerase II"/>
    <property type="evidence" value="ECO:0000318"/>
    <property type="project" value="GO_Central"/>
</dbReference>
<dbReference type="CDD" id="cd12148">
    <property type="entry name" value="fungal_TF_MHR"/>
    <property type="match status" value="1"/>
</dbReference>
<dbReference type="CDD" id="cd00067">
    <property type="entry name" value="GAL4"/>
    <property type="match status" value="1"/>
</dbReference>
<dbReference type="Gene3D" id="4.10.240.10">
    <property type="entry name" value="Zn(2)-C6 fungal-type DNA-binding domain"/>
    <property type="match status" value="1"/>
</dbReference>
<dbReference type="InterPro" id="IPR050987">
    <property type="entry name" value="AtrR-like"/>
</dbReference>
<dbReference type="InterPro" id="IPR007219">
    <property type="entry name" value="Transcription_factor_dom_fun"/>
</dbReference>
<dbReference type="InterPro" id="IPR036864">
    <property type="entry name" value="Zn2-C6_fun-type_DNA-bd_sf"/>
</dbReference>
<dbReference type="InterPro" id="IPR001138">
    <property type="entry name" value="Zn2Cys6_DnaBD"/>
</dbReference>
<dbReference type="PANTHER" id="PTHR46910">
    <property type="entry name" value="TRANSCRIPTION FACTOR PDR1"/>
    <property type="match status" value="1"/>
</dbReference>
<dbReference type="PANTHER" id="PTHR46910:SF37">
    <property type="entry name" value="ZN(II)2CYS6 TRANSCRIPTION FACTOR (EUROFUNG)"/>
    <property type="match status" value="1"/>
</dbReference>
<dbReference type="Pfam" id="PF04082">
    <property type="entry name" value="Fungal_trans"/>
    <property type="match status" value="1"/>
</dbReference>
<dbReference type="Pfam" id="PF00172">
    <property type="entry name" value="Zn_clus"/>
    <property type="match status" value="1"/>
</dbReference>
<dbReference type="SMART" id="SM00906">
    <property type="entry name" value="Fungal_trans"/>
    <property type="match status" value="1"/>
</dbReference>
<dbReference type="SMART" id="SM00066">
    <property type="entry name" value="GAL4"/>
    <property type="match status" value="1"/>
</dbReference>
<dbReference type="SUPFAM" id="SSF57701">
    <property type="entry name" value="Zn2/Cys6 DNA-binding domain"/>
    <property type="match status" value="1"/>
</dbReference>
<dbReference type="PROSITE" id="PS00463">
    <property type="entry name" value="ZN2_CY6_FUNGAL_1"/>
    <property type="match status" value="1"/>
</dbReference>
<dbReference type="PROSITE" id="PS50048">
    <property type="entry name" value="ZN2_CY6_FUNGAL_2"/>
    <property type="match status" value="1"/>
</dbReference>
<keyword id="KW-0238">DNA-binding</keyword>
<keyword id="KW-0479">Metal-binding</keyword>
<keyword id="KW-0539">Nucleus</keyword>
<keyword id="KW-1185">Reference proteome</keyword>
<keyword id="KW-0804">Transcription</keyword>
<keyword id="KW-0805">Transcription regulation</keyword>
<keyword id="KW-0862">Zinc</keyword>
<keyword id="KW-0863">Zinc-finger</keyword>
<evidence type="ECO:0000255" key="1">
    <source>
        <dbReference type="PROSITE-ProRule" id="PRU00227"/>
    </source>
</evidence>
<evidence type="ECO:0000305" key="2"/>